<accession>Q5SW96</accession>
<accession>A2BHI5</accession>
<accession>Q6TQS9</accession>
<accession>Q8N2Y0</accession>
<accession>Q9UFI9</accession>
<reference key="1">
    <citation type="journal article" date="2001" name="Science">
        <title>Autosomal recessive hypercholesterolemia caused by mutations in a putative LDL receptor adaptor protein.</title>
        <authorList>
            <person name="Garcia C.K."/>
            <person name="Wilund K.R."/>
            <person name="Arca M."/>
            <person name="Zuliani G."/>
            <person name="Fellin R."/>
            <person name="Maioli M."/>
            <person name="Calandra S."/>
            <person name="Bertolini S."/>
            <person name="Cossu F."/>
            <person name="Grishin N."/>
            <person name="Barnes R."/>
            <person name="Cohen J.C."/>
            <person name="Hobbs H.H."/>
        </authorList>
    </citation>
    <scope>NUCLEOTIDE SEQUENCE [GENOMIC DNA]</scope>
    <scope>VARIANT PRO-202</scope>
    <scope>VARIANT FHCL4 HIS-202</scope>
</reference>
<reference key="2">
    <citation type="journal article" date="2002" name="Hum. Mol. Genet.">
        <title>Molecular mechanisms of autosomal recessive hypercholesterolemia.</title>
        <authorList>
            <person name="Wilund K.R."/>
            <person name="Yi M."/>
            <person name="Campagna F."/>
            <person name="Arca M."/>
            <person name="Zuliani G."/>
            <person name="Fellin R."/>
            <person name="Ho Y.K."/>
            <person name="Garcia J.V."/>
            <person name="Hobbs H.H."/>
            <person name="Cohen J.C."/>
        </authorList>
    </citation>
    <scope>NUCLEOTIDE SEQUENCE [GENOMIC DNA]</scope>
    <scope>VARIANT PRO-202</scope>
</reference>
<reference key="3">
    <citation type="journal article" date="2007" name="BMC Genomics">
        <title>The full-ORF clone resource of the German cDNA consortium.</title>
        <authorList>
            <person name="Bechtel S."/>
            <person name="Rosenfelder H."/>
            <person name="Duda A."/>
            <person name="Schmidt C.P."/>
            <person name="Ernst U."/>
            <person name="Wellenreuther R."/>
            <person name="Mehrle A."/>
            <person name="Schuster C."/>
            <person name="Bahr A."/>
            <person name="Bloecker H."/>
            <person name="Heubner D."/>
            <person name="Hoerlein A."/>
            <person name="Michel G."/>
            <person name="Wedler H."/>
            <person name="Koehrer K."/>
            <person name="Ottenwaelder B."/>
            <person name="Poustka A."/>
            <person name="Wiemann S."/>
            <person name="Schupp I."/>
        </authorList>
    </citation>
    <scope>NUCLEOTIDE SEQUENCE [LARGE SCALE MRNA]</scope>
    <scope>VARIANT PRO-202</scope>
    <source>
        <tissue>Uterus</tissue>
    </source>
</reference>
<reference key="4">
    <citation type="journal article" date="2006" name="Nature">
        <title>The DNA sequence and biological annotation of human chromosome 1.</title>
        <authorList>
            <person name="Gregory S.G."/>
            <person name="Barlow K.F."/>
            <person name="McLay K.E."/>
            <person name="Kaul R."/>
            <person name="Swarbreck D."/>
            <person name="Dunham A."/>
            <person name="Scott C.E."/>
            <person name="Howe K.L."/>
            <person name="Woodfine K."/>
            <person name="Spencer C.C.A."/>
            <person name="Jones M.C."/>
            <person name="Gillson C."/>
            <person name="Searle S."/>
            <person name="Zhou Y."/>
            <person name="Kokocinski F."/>
            <person name="McDonald L."/>
            <person name="Evans R."/>
            <person name="Phillips K."/>
            <person name="Atkinson A."/>
            <person name="Cooper R."/>
            <person name="Jones C."/>
            <person name="Hall R.E."/>
            <person name="Andrews T.D."/>
            <person name="Lloyd C."/>
            <person name="Ainscough R."/>
            <person name="Almeida J.P."/>
            <person name="Ambrose K.D."/>
            <person name="Anderson F."/>
            <person name="Andrew R.W."/>
            <person name="Ashwell R.I.S."/>
            <person name="Aubin K."/>
            <person name="Babbage A.K."/>
            <person name="Bagguley C.L."/>
            <person name="Bailey J."/>
            <person name="Beasley H."/>
            <person name="Bethel G."/>
            <person name="Bird C.P."/>
            <person name="Bray-Allen S."/>
            <person name="Brown J.Y."/>
            <person name="Brown A.J."/>
            <person name="Buckley D."/>
            <person name="Burton J."/>
            <person name="Bye J."/>
            <person name="Carder C."/>
            <person name="Chapman J.C."/>
            <person name="Clark S.Y."/>
            <person name="Clarke G."/>
            <person name="Clee C."/>
            <person name="Cobley V."/>
            <person name="Collier R.E."/>
            <person name="Corby N."/>
            <person name="Coville G.J."/>
            <person name="Davies J."/>
            <person name="Deadman R."/>
            <person name="Dunn M."/>
            <person name="Earthrowl M."/>
            <person name="Ellington A.G."/>
            <person name="Errington H."/>
            <person name="Frankish A."/>
            <person name="Frankland J."/>
            <person name="French L."/>
            <person name="Garner P."/>
            <person name="Garnett J."/>
            <person name="Gay L."/>
            <person name="Ghori M.R.J."/>
            <person name="Gibson R."/>
            <person name="Gilby L.M."/>
            <person name="Gillett W."/>
            <person name="Glithero R.J."/>
            <person name="Grafham D.V."/>
            <person name="Griffiths C."/>
            <person name="Griffiths-Jones S."/>
            <person name="Grocock R."/>
            <person name="Hammond S."/>
            <person name="Harrison E.S.I."/>
            <person name="Hart E."/>
            <person name="Haugen E."/>
            <person name="Heath P.D."/>
            <person name="Holmes S."/>
            <person name="Holt K."/>
            <person name="Howden P.J."/>
            <person name="Hunt A.R."/>
            <person name="Hunt S.E."/>
            <person name="Hunter G."/>
            <person name="Isherwood J."/>
            <person name="James R."/>
            <person name="Johnson C."/>
            <person name="Johnson D."/>
            <person name="Joy A."/>
            <person name="Kay M."/>
            <person name="Kershaw J.K."/>
            <person name="Kibukawa M."/>
            <person name="Kimberley A.M."/>
            <person name="King A."/>
            <person name="Knights A.J."/>
            <person name="Lad H."/>
            <person name="Laird G."/>
            <person name="Lawlor S."/>
            <person name="Leongamornlert D.A."/>
            <person name="Lloyd D.M."/>
            <person name="Loveland J."/>
            <person name="Lovell J."/>
            <person name="Lush M.J."/>
            <person name="Lyne R."/>
            <person name="Martin S."/>
            <person name="Mashreghi-Mohammadi M."/>
            <person name="Matthews L."/>
            <person name="Matthews N.S.W."/>
            <person name="McLaren S."/>
            <person name="Milne S."/>
            <person name="Mistry S."/>
            <person name="Moore M.J.F."/>
            <person name="Nickerson T."/>
            <person name="O'Dell C.N."/>
            <person name="Oliver K."/>
            <person name="Palmeiri A."/>
            <person name="Palmer S.A."/>
            <person name="Parker A."/>
            <person name="Patel D."/>
            <person name="Pearce A.V."/>
            <person name="Peck A.I."/>
            <person name="Pelan S."/>
            <person name="Phelps K."/>
            <person name="Phillimore B.J."/>
            <person name="Plumb R."/>
            <person name="Rajan J."/>
            <person name="Raymond C."/>
            <person name="Rouse G."/>
            <person name="Saenphimmachak C."/>
            <person name="Sehra H.K."/>
            <person name="Sheridan E."/>
            <person name="Shownkeen R."/>
            <person name="Sims S."/>
            <person name="Skuce C.D."/>
            <person name="Smith M."/>
            <person name="Steward C."/>
            <person name="Subramanian S."/>
            <person name="Sycamore N."/>
            <person name="Tracey A."/>
            <person name="Tromans A."/>
            <person name="Van Helmond Z."/>
            <person name="Wall M."/>
            <person name="Wallis J.M."/>
            <person name="White S."/>
            <person name="Whitehead S.L."/>
            <person name="Wilkinson J.E."/>
            <person name="Willey D.L."/>
            <person name="Williams H."/>
            <person name="Wilming L."/>
            <person name="Wray P.W."/>
            <person name="Wu Z."/>
            <person name="Coulson A."/>
            <person name="Vaudin M."/>
            <person name="Sulston J.E."/>
            <person name="Durbin R.M."/>
            <person name="Hubbard T."/>
            <person name="Wooster R."/>
            <person name="Dunham I."/>
            <person name="Carter N.P."/>
            <person name="McVean G."/>
            <person name="Ross M.T."/>
            <person name="Harrow J."/>
            <person name="Olson M.V."/>
            <person name="Beck S."/>
            <person name="Rogers J."/>
            <person name="Bentley D.R."/>
        </authorList>
    </citation>
    <scope>NUCLEOTIDE SEQUENCE [LARGE SCALE GENOMIC DNA]</scope>
</reference>
<reference key="5">
    <citation type="journal article" date="2004" name="Genome Res.">
        <title>The status, quality, and expansion of the NIH full-length cDNA project: the Mammalian Gene Collection (MGC).</title>
        <authorList>
            <consortium name="The MGC Project Team"/>
        </authorList>
    </citation>
    <scope>NUCLEOTIDE SEQUENCE [LARGE SCALE MRNA]</scope>
    <scope>VARIANT PRO-202</scope>
    <source>
        <tissue>Brain</tissue>
    </source>
</reference>
<reference key="6">
    <citation type="journal article" date="2002" name="J. Biol. Chem.">
        <title>ARH is a modular adaptor protein that interacts with the LDL receptor, clathrin, and AP-2.</title>
        <authorList>
            <person name="He G."/>
            <person name="Gupta S."/>
            <person name="Yi M."/>
            <person name="Michaely P."/>
            <person name="Hobbs H.H."/>
            <person name="Cohen J.C."/>
        </authorList>
    </citation>
    <scope>INTERACTION WITH LDLR; CLATHRIN AND AP-2 COMPLEX</scope>
    <scope>MUTAGENESIS OF PHE-165; 212-LEU-LEU-213; ASP-214; GLU-216 AND ARG-266</scope>
    <scope>MOTIF</scope>
    <scope>REGION</scope>
</reference>
<reference key="7">
    <citation type="journal article" date="2002" name="Proc. Natl. Acad. Sci. U.S.A.">
        <title>The autosomal recessive hypercholesterolemia (ARH) protein interfaces directly with the clathrin-coat machinery.</title>
        <authorList>
            <person name="Mishra S.K."/>
            <person name="Watkins S.C."/>
            <person name="Traub L.M."/>
        </authorList>
    </citation>
    <scope>CHARACTERIZATION</scope>
    <scope>INTERACTION WITH CLATHRIN AND AP-2 COMPLEX</scope>
    <scope>SUBCELLULAR LOCATION</scope>
</reference>
<reference key="8">
    <citation type="journal article" date="2005" name="J. Biol. Chem.">
        <title>Functional dissection of an AP-2 beta2 appendage-binding sequence within the autosomal recessive hypercholesterolemia protein.</title>
        <authorList>
            <person name="Mishra S.K."/>
            <person name="Keyel P.A."/>
            <person name="Edeling M.A."/>
            <person name="Dupin A.L."/>
            <person name="Owen D.J."/>
            <person name="Traub L.M."/>
        </authorList>
    </citation>
    <scope>FUNCTION</scope>
    <scope>INTERACTION WITH AP2B1</scope>
</reference>
<reference key="9">
    <citation type="journal article" date="2006" name="PLoS Biol.">
        <title>Role of the AP2 beta-appendage hub in recruiting partners for clathrin-coated vesicle assembly.</title>
        <authorList>
            <person name="Schmid E.M."/>
            <person name="Ford M.G.J."/>
            <person name="Burtey A."/>
            <person name="Praefcke G.J.K."/>
            <person name="Peak-Chew S.-Y."/>
            <person name="Mills I.G."/>
            <person name="Benmerah A."/>
            <person name="McMahon H.T."/>
        </authorList>
    </citation>
    <scope>INTERACTION WITH AP2B1</scope>
    <scope>MUTAGENESIS OF ASP-256</scope>
</reference>
<reference key="10">
    <citation type="journal article" date="2008" name="Proc. Natl. Acad. Sci. U.S.A.">
        <title>A quantitative atlas of mitotic phosphorylation.</title>
        <authorList>
            <person name="Dephoure N."/>
            <person name="Zhou C."/>
            <person name="Villen J."/>
            <person name="Beausoleil S.A."/>
            <person name="Bakalarski C.E."/>
            <person name="Elledge S.J."/>
            <person name="Gygi S.P."/>
        </authorList>
    </citation>
    <scope>PHOSPHORYLATION [LARGE SCALE ANALYSIS] AT SER-14</scope>
    <scope>IDENTIFICATION BY MASS SPECTROMETRY [LARGE SCALE ANALYSIS]</scope>
    <source>
        <tissue>Cervix carcinoma</tissue>
    </source>
</reference>
<reference key="11">
    <citation type="journal article" date="2011" name="BMC Syst. Biol.">
        <title>Initial characterization of the human central proteome.</title>
        <authorList>
            <person name="Burkard T.R."/>
            <person name="Planyavsky M."/>
            <person name="Kaupe I."/>
            <person name="Breitwieser F.P."/>
            <person name="Buerckstuemmer T."/>
            <person name="Bennett K.L."/>
            <person name="Superti-Furga G."/>
            <person name="Colinge J."/>
        </authorList>
    </citation>
    <scope>IDENTIFICATION BY MASS SPECTROMETRY [LARGE SCALE ANALYSIS]</scope>
</reference>
<reference key="12">
    <citation type="journal article" date="2012" name="Proc. Natl. Acad. Sci. U.S.A.">
        <title>N-terminal acetylome analyses and functional insights of the N-terminal acetyltransferase NatB.</title>
        <authorList>
            <person name="Van Damme P."/>
            <person name="Lasa M."/>
            <person name="Polevoda B."/>
            <person name="Gazquez C."/>
            <person name="Elosegui-Artola A."/>
            <person name="Kim D.S."/>
            <person name="De Juan-Pardo E."/>
            <person name="Demeyer K."/>
            <person name="Hole K."/>
            <person name="Larrea E."/>
            <person name="Timmerman E."/>
            <person name="Prieto J."/>
            <person name="Arnesen T."/>
            <person name="Sherman F."/>
            <person name="Gevaert K."/>
            <person name="Aldabe R."/>
        </authorList>
    </citation>
    <scope>ACETYLATION [LARGE SCALE ANALYSIS] AT MET-1</scope>
    <scope>IDENTIFICATION BY MASS SPECTROMETRY [LARGE SCALE ANALYSIS]</scope>
</reference>
<reference key="13">
    <citation type="journal article" date="2013" name="J. Proteome Res.">
        <title>Toward a comprehensive characterization of a human cancer cell phosphoproteome.</title>
        <authorList>
            <person name="Zhou H."/>
            <person name="Di Palma S."/>
            <person name="Preisinger C."/>
            <person name="Peng M."/>
            <person name="Polat A.N."/>
            <person name="Heck A.J."/>
            <person name="Mohammed S."/>
        </authorList>
    </citation>
    <scope>PHOSPHORYLATION [LARGE SCALE ANALYSIS] AT SER-14 AND SER-186</scope>
    <scope>IDENTIFICATION BY MASS SPECTROMETRY [LARGE SCALE ANALYSIS]</scope>
    <source>
        <tissue>Cervix carcinoma</tissue>
        <tissue>Erythroleukemia</tissue>
    </source>
</reference>
<reference key="14">
    <citation type="journal article" date="2006" name="Dev. Cell">
        <title>Molecular switches involving the AP-2 beta2 appendage regulate endocytic cargo selection and clathrin coat assembly.</title>
        <authorList>
            <person name="Edeling M.A."/>
            <person name="Mishra S.K."/>
            <person name="Keyel P.A."/>
            <person name="Steinhauser A.L."/>
            <person name="Collins B.M."/>
            <person name="Roth R."/>
            <person name="Heuser J.E."/>
            <person name="Owen D.J."/>
            <person name="Traub L.M."/>
        </authorList>
    </citation>
    <scope>X-RAY CRYSTALLOGRAPHY (1.60 ANGSTROMS) OF 252-267 IN COMPLEX WITH AP2B1</scope>
    <scope>DOMAIN</scope>
</reference>
<reference key="15">
    <citation type="journal article" date="2010" name="J. Atheroscler. Thromb.">
        <title>A novel Thr56Met mutation of the autosomal recessive hypercholesterolemia gene associated with hypercholesterolemia.</title>
        <authorList>
            <person name="Harada K."/>
            <person name="Miyamoto Y."/>
            <person name="Morisaki H."/>
            <person name="Ohta N."/>
            <person name="Yamanaka I."/>
            <person name="Kokubo Y."/>
            <person name="Makino H."/>
            <person name="Harada-Shiba M."/>
            <person name="Okayama A."/>
            <person name="Tomoike H."/>
            <person name="Okamura T."/>
            <person name="Tomonori O."/>
            <person name="Saito Y."/>
            <person name="Yoshimasa Y."/>
            <person name="Morisaki T."/>
        </authorList>
    </citation>
    <scope>VARIANTS MET-56 AND PRO-202</scope>
</reference>
<keyword id="KW-0002">3D-structure</keyword>
<keyword id="KW-0007">Acetylation</keyword>
<keyword id="KW-0065">Atherosclerosis</keyword>
<keyword id="KW-0153">Cholesterol metabolism</keyword>
<keyword id="KW-0963">Cytoplasm</keyword>
<keyword id="KW-0225">Disease variant</keyword>
<keyword id="KW-0254">Endocytosis</keyword>
<keyword id="KW-0380">Hyperlipidemia</keyword>
<keyword id="KW-0443">Lipid metabolism</keyword>
<keyword id="KW-0597">Phosphoprotein</keyword>
<keyword id="KW-1267">Proteomics identification</keyword>
<keyword id="KW-1185">Reference proteome</keyword>
<keyword id="KW-0753">Steroid metabolism</keyword>
<keyword id="KW-1207">Sterol metabolism</keyword>
<evidence type="ECO:0000250" key="1">
    <source>
        <dbReference type="UniProtKB" id="D3ZAR1"/>
    </source>
</evidence>
<evidence type="ECO:0000250" key="2">
    <source>
        <dbReference type="UniProtKB" id="Q8C142"/>
    </source>
</evidence>
<evidence type="ECO:0000255" key="3">
    <source>
        <dbReference type="PROSITE-ProRule" id="PRU00148"/>
    </source>
</evidence>
<evidence type="ECO:0000269" key="4">
    <source>
    </source>
</evidence>
<evidence type="ECO:0000269" key="5">
    <source>
    </source>
</evidence>
<evidence type="ECO:0000269" key="6">
    <source>
    </source>
</evidence>
<evidence type="ECO:0000269" key="7">
    <source>
    </source>
</evidence>
<evidence type="ECO:0000269" key="8">
    <source>
    </source>
</evidence>
<evidence type="ECO:0000269" key="9">
    <source>
    </source>
</evidence>
<evidence type="ECO:0000269" key="10">
    <source>
    </source>
</evidence>
<evidence type="ECO:0000269" key="11">
    <source>
    </source>
</evidence>
<evidence type="ECO:0000269" key="12">
    <source>
    </source>
</evidence>
<evidence type="ECO:0000269" key="13">
    <source>
    </source>
</evidence>
<evidence type="ECO:0000303" key="14">
    <source>
    </source>
</evidence>
<evidence type="ECO:0000305" key="15"/>
<evidence type="ECO:0000312" key="16">
    <source>
        <dbReference type="HGNC" id="HGNC:18640"/>
    </source>
</evidence>
<evidence type="ECO:0007744" key="17">
    <source>
    </source>
</evidence>
<evidence type="ECO:0007744" key="18">
    <source>
    </source>
</evidence>
<evidence type="ECO:0007744" key="19">
    <source>
    </source>
</evidence>
<evidence type="ECO:0007829" key="20">
    <source>
        <dbReference type="PDB" id="2G30"/>
    </source>
</evidence>
<sequence length="308" mass="33885">MDALKSAGRALIRSPSLAKQSWGGGGRHRKLPENWTDTRETLLEGMLFSLKYLGMTLVEQPKGEELSAAAIKRIVATAKASGKKLQKVTLKVSPRGIILTDNLTNQLIENVSIYRISYCTADKMHDKVFAYIAQSQHNQSLECHAFLCTKRKMAQAVTLTVAQAFKVAFEFWQVSKEEKEKRDKASQEGGDVLGARQDCTPSLKSLVATGNLLDLEETAKAPLSTVSANTTNMDEVPRPQALSGSSVVWELDDGLDEAFSRLAQSRTNPQVLDTGLTAQDMHYAQCLSPVDWDKPDSSGTEQDDLFSF</sequence>
<name>ARH_HUMAN</name>
<dbReference type="EMBL" id="AY389348">
    <property type="protein sequence ID" value="AAQ90407.1"/>
    <property type="molecule type" value="Genomic_DNA"/>
</dbReference>
<dbReference type="EMBL" id="AL117654">
    <property type="protein sequence ID" value="CAB56030.2"/>
    <property type="molecule type" value="mRNA"/>
</dbReference>
<dbReference type="EMBL" id="AL606491">
    <property type="status" value="NOT_ANNOTATED_CDS"/>
    <property type="molecule type" value="Genomic_DNA"/>
</dbReference>
<dbReference type="EMBL" id="BX572623">
    <property type="status" value="NOT_ANNOTATED_CDS"/>
    <property type="molecule type" value="Genomic_DNA"/>
</dbReference>
<dbReference type="EMBL" id="BC029770">
    <property type="protein sequence ID" value="AAH29770.2"/>
    <property type="molecule type" value="mRNA"/>
</dbReference>
<dbReference type="CCDS" id="CCDS30639.1"/>
<dbReference type="PIR" id="T17340">
    <property type="entry name" value="T17340"/>
</dbReference>
<dbReference type="RefSeq" id="NP_056442.2">
    <property type="nucleotide sequence ID" value="NM_015627.3"/>
</dbReference>
<dbReference type="PDB" id="2G30">
    <property type="method" value="X-ray"/>
    <property type="resolution" value="1.60 A"/>
    <property type="chains" value="P=252-267"/>
</dbReference>
<dbReference type="PDBsum" id="2G30"/>
<dbReference type="SMR" id="Q5SW96"/>
<dbReference type="BioGRID" id="117561">
    <property type="interactions" value="36"/>
</dbReference>
<dbReference type="ELM" id="Q5SW96"/>
<dbReference type="FunCoup" id="Q5SW96">
    <property type="interactions" value="509"/>
</dbReference>
<dbReference type="IntAct" id="Q5SW96">
    <property type="interactions" value="27"/>
</dbReference>
<dbReference type="MINT" id="Q5SW96"/>
<dbReference type="STRING" id="9606.ENSP00000363458"/>
<dbReference type="MoonDB" id="Q5SW96">
    <property type="type" value="Curated"/>
</dbReference>
<dbReference type="iPTMnet" id="Q5SW96"/>
<dbReference type="PhosphoSitePlus" id="Q5SW96"/>
<dbReference type="BioMuta" id="LDLRAP1"/>
<dbReference type="DMDM" id="116241254"/>
<dbReference type="jPOST" id="Q5SW96"/>
<dbReference type="MassIVE" id="Q5SW96"/>
<dbReference type="PaxDb" id="9606-ENSP00000363458"/>
<dbReference type="PeptideAtlas" id="Q5SW96"/>
<dbReference type="ProteomicsDB" id="63967"/>
<dbReference type="Pumba" id="Q5SW96"/>
<dbReference type="Antibodypedia" id="30473">
    <property type="antibodies" value="568 antibodies from 34 providers"/>
</dbReference>
<dbReference type="DNASU" id="26119"/>
<dbReference type="Ensembl" id="ENST00000374338.5">
    <property type="protein sequence ID" value="ENSP00000363458.4"/>
    <property type="gene ID" value="ENSG00000157978.13"/>
</dbReference>
<dbReference type="GeneID" id="26119"/>
<dbReference type="KEGG" id="hsa:26119"/>
<dbReference type="MANE-Select" id="ENST00000374338.5">
    <property type="protein sequence ID" value="ENSP00000363458.4"/>
    <property type="RefSeq nucleotide sequence ID" value="NM_015627.3"/>
    <property type="RefSeq protein sequence ID" value="NP_056442.2"/>
</dbReference>
<dbReference type="UCSC" id="uc001bkl.5">
    <property type="organism name" value="human"/>
</dbReference>
<dbReference type="AGR" id="HGNC:18640"/>
<dbReference type="CTD" id="26119"/>
<dbReference type="DisGeNET" id="26119"/>
<dbReference type="GeneCards" id="LDLRAP1"/>
<dbReference type="GeneReviews" id="LDLRAP1"/>
<dbReference type="HGNC" id="HGNC:18640">
    <property type="gene designation" value="LDLRAP1"/>
</dbReference>
<dbReference type="HPA" id="ENSG00000157978">
    <property type="expression patterns" value="Tissue enhanced (brain)"/>
</dbReference>
<dbReference type="MalaCards" id="LDLRAP1"/>
<dbReference type="MIM" id="603813">
    <property type="type" value="phenotype"/>
</dbReference>
<dbReference type="MIM" id="605747">
    <property type="type" value="gene"/>
</dbReference>
<dbReference type="neXtProt" id="NX_Q5SW96"/>
<dbReference type="OpenTargets" id="ENSG00000157978"/>
<dbReference type="Orphanet" id="391665">
    <property type="disease" value="Homozygous familial hypercholesterolemia"/>
</dbReference>
<dbReference type="PharmGKB" id="PA128394641"/>
<dbReference type="VEuPathDB" id="HostDB:ENSG00000157978"/>
<dbReference type="eggNOG" id="KOG3536">
    <property type="taxonomic scope" value="Eukaryota"/>
</dbReference>
<dbReference type="GeneTree" id="ENSGT00940000157118"/>
<dbReference type="HOGENOM" id="CLU_078253_0_0_1"/>
<dbReference type="InParanoid" id="Q5SW96"/>
<dbReference type="OMA" id="CTADKAH"/>
<dbReference type="OrthoDB" id="9999955at2759"/>
<dbReference type="PAN-GO" id="Q5SW96">
    <property type="GO annotations" value="1 GO annotation based on evolutionary models"/>
</dbReference>
<dbReference type="PhylomeDB" id="Q5SW96"/>
<dbReference type="TreeFam" id="TF314159"/>
<dbReference type="PathwayCommons" id="Q5SW96"/>
<dbReference type="Reactome" id="R-HSA-196791">
    <property type="pathway name" value="Vitamin D (calciferol) metabolism"/>
</dbReference>
<dbReference type="Reactome" id="R-HSA-8856825">
    <property type="pathway name" value="Cargo recognition for clathrin-mediated endocytosis"/>
</dbReference>
<dbReference type="Reactome" id="R-HSA-8856828">
    <property type="pathway name" value="Clathrin-mediated endocytosis"/>
</dbReference>
<dbReference type="Reactome" id="R-HSA-8964026">
    <property type="pathway name" value="Chylomicron clearance"/>
</dbReference>
<dbReference type="Reactome" id="R-HSA-8964038">
    <property type="pathway name" value="LDL clearance"/>
</dbReference>
<dbReference type="Reactome" id="R-HSA-9758890">
    <property type="pathway name" value="Transport of RCbl within the body"/>
</dbReference>
<dbReference type="SignaLink" id="Q5SW96"/>
<dbReference type="BioGRID-ORCS" id="26119">
    <property type="hits" value="22 hits in 1154 CRISPR screens"/>
</dbReference>
<dbReference type="CD-CODE" id="8C2F96ED">
    <property type="entry name" value="Centrosome"/>
</dbReference>
<dbReference type="ChiTaRS" id="LDLRAP1">
    <property type="organism name" value="human"/>
</dbReference>
<dbReference type="EvolutionaryTrace" id="Q5SW96"/>
<dbReference type="GeneWiki" id="Low_density_lipoprotein_receptor_adapter_protein_1"/>
<dbReference type="GenomeRNAi" id="26119"/>
<dbReference type="Pharos" id="Q5SW96">
    <property type="development level" value="Tbio"/>
</dbReference>
<dbReference type="PRO" id="PR:Q5SW96"/>
<dbReference type="Proteomes" id="UP000005640">
    <property type="component" value="Chromosome 1"/>
</dbReference>
<dbReference type="RNAct" id="Q5SW96">
    <property type="molecule type" value="protein"/>
</dbReference>
<dbReference type="Bgee" id="ENSG00000157978">
    <property type="expression patterns" value="Expressed in cerebellar hemisphere and 197 other cell types or tissues"/>
</dbReference>
<dbReference type="GO" id="GO:0030424">
    <property type="term" value="C:axon"/>
    <property type="evidence" value="ECO:0000250"/>
    <property type="project" value="BHF-UCL"/>
</dbReference>
<dbReference type="GO" id="GO:0009925">
    <property type="term" value="C:basal plasma membrane"/>
    <property type="evidence" value="ECO:0000314"/>
    <property type="project" value="UniProtKB"/>
</dbReference>
<dbReference type="GO" id="GO:0030669">
    <property type="term" value="C:clathrin-coated endocytic vesicle membrane"/>
    <property type="evidence" value="ECO:0000304"/>
    <property type="project" value="Reactome"/>
</dbReference>
<dbReference type="GO" id="GO:0009898">
    <property type="term" value="C:cytoplasmic side of plasma membrane"/>
    <property type="evidence" value="ECO:0000314"/>
    <property type="project" value="BHF-UCL"/>
</dbReference>
<dbReference type="GO" id="GO:0005829">
    <property type="term" value="C:cytosol"/>
    <property type="evidence" value="ECO:0000314"/>
    <property type="project" value="UniProtKB"/>
</dbReference>
<dbReference type="GO" id="GO:0005769">
    <property type="term" value="C:early endosome"/>
    <property type="evidence" value="ECO:0000314"/>
    <property type="project" value="UniProtKB"/>
</dbReference>
<dbReference type="GO" id="GO:0005883">
    <property type="term" value="C:neurofilament"/>
    <property type="evidence" value="ECO:0000250"/>
    <property type="project" value="BHF-UCL"/>
</dbReference>
<dbReference type="GO" id="GO:0005886">
    <property type="term" value="C:plasma membrane"/>
    <property type="evidence" value="ECO:0000304"/>
    <property type="project" value="Reactome"/>
</dbReference>
<dbReference type="GO" id="GO:0055037">
    <property type="term" value="C:recycling endosome"/>
    <property type="evidence" value="ECO:0000314"/>
    <property type="project" value="BHF-UCL"/>
</dbReference>
<dbReference type="GO" id="GO:0001540">
    <property type="term" value="F:amyloid-beta binding"/>
    <property type="evidence" value="ECO:0000353"/>
    <property type="project" value="BHF-UCL"/>
</dbReference>
<dbReference type="GO" id="GO:0035650">
    <property type="term" value="F:AP-1 adaptor complex binding"/>
    <property type="evidence" value="ECO:0000314"/>
    <property type="project" value="UniProtKB"/>
</dbReference>
<dbReference type="GO" id="GO:0035612">
    <property type="term" value="F:AP-2 adaptor complex binding"/>
    <property type="evidence" value="ECO:0000314"/>
    <property type="project" value="UniProtKB"/>
</dbReference>
<dbReference type="GO" id="GO:0035615">
    <property type="term" value="F:clathrin adaptor activity"/>
    <property type="evidence" value="ECO:0000314"/>
    <property type="project" value="BHF-UCL"/>
</dbReference>
<dbReference type="GO" id="GO:0030276">
    <property type="term" value="F:clathrin binding"/>
    <property type="evidence" value="ECO:0000314"/>
    <property type="project" value="UniProtKB"/>
</dbReference>
<dbReference type="GO" id="GO:0050750">
    <property type="term" value="F:low-density lipoprotein particle receptor binding"/>
    <property type="evidence" value="ECO:0000353"/>
    <property type="project" value="BHF-UCL"/>
</dbReference>
<dbReference type="GO" id="GO:0005546">
    <property type="term" value="F:phosphatidylinositol-4,5-bisphosphate binding"/>
    <property type="evidence" value="ECO:0000314"/>
    <property type="project" value="BHF-UCL"/>
</dbReference>
<dbReference type="GO" id="GO:0001784">
    <property type="term" value="F:phosphotyrosine residue binding"/>
    <property type="evidence" value="ECO:0000314"/>
    <property type="project" value="UniProtKB"/>
</dbReference>
<dbReference type="GO" id="GO:0035591">
    <property type="term" value="F:signaling adaptor activity"/>
    <property type="evidence" value="ECO:0000314"/>
    <property type="project" value="BHF-UCL"/>
</dbReference>
<dbReference type="GO" id="GO:0030159">
    <property type="term" value="F:signaling receptor complex adaptor activity"/>
    <property type="evidence" value="ECO:0000315"/>
    <property type="project" value="UniProtKB"/>
</dbReference>
<dbReference type="GO" id="GO:0042982">
    <property type="term" value="P:amyloid precursor protein metabolic process"/>
    <property type="evidence" value="ECO:0000315"/>
    <property type="project" value="BHF-UCL"/>
</dbReference>
<dbReference type="GO" id="GO:0071345">
    <property type="term" value="P:cellular response to cytokine stimulus"/>
    <property type="evidence" value="ECO:0000315"/>
    <property type="project" value="BHF-UCL"/>
</dbReference>
<dbReference type="GO" id="GO:0042632">
    <property type="term" value="P:cholesterol homeostasis"/>
    <property type="evidence" value="ECO:0000315"/>
    <property type="project" value="BHF-UCL"/>
</dbReference>
<dbReference type="GO" id="GO:0008203">
    <property type="term" value="P:cholesterol metabolic process"/>
    <property type="evidence" value="ECO:0000303"/>
    <property type="project" value="UniProtKB"/>
</dbReference>
<dbReference type="GO" id="GO:0030301">
    <property type="term" value="P:cholesterol transport"/>
    <property type="evidence" value="ECO:0000303"/>
    <property type="project" value="UniProtKB"/>
</dbReference>
<dbReference type="GO" id="GO:0034383">
    <property type="term" value="P:low-density lipoprotein particle clearance"/>
    <property type="evidence" value="ECO:0000315"/>
    <property type="project" value="BHF-UCL"/>
</dbReference>
<dbReference type="GO" id="GO:0090205">
    <property type="term" value="P:positive regulation of cholesterol metabolic process"/>
    <property type="evidence" value="ECO:0000305"/>
    <property type="project" value="BHF-UCL"/>
</dbReference>
<dbReference type="GO" id="GO:1905581">
    <property type="term" value="P:positive regulation of low-density lipoprotein particle clearance"/>
    <property type="evidence" value="ECO:0000315"/>
    <property type="project" value="BHF-UCL"/>
</dbReference>
<dbReference type="GO" id="GO:0048260">
    <property type="term" value="P:positive regulation of receptor-mediated endocytosis"/>
    <property type="evidence" value="ECO:0000315"/>
    <property type="project" value="UniProtKB"/>
</dbReference>
<dbReference type="GO" id="GO:1905602">
    <property type="term" value="P:positive regulation of receptor-mediated endocytosis involved in cholesterol transport"/>
    <property type="evidence" value="ECO:0000315"/>
    <property type="project" value="BHF-UCL"/>
</dbReference>
<dbReference type="GO" id="GO:1904707">
    <property type="term" value="P:positive regulation of vascular associated smooth muscle cell proliferation"/>
    <property type="evidence" value="ECO:0000315"/>
    <property type="project" value="BHF-UCL"/>
</dbReference>
<dbReference type="GO" id="GO:0031623">
    <property type="term" value="P:receptor internalization"/>
    <property type="evidence" value="ECO:0000315"/>
    <property type="project" value="BHF-UCL"/>
</dbReference>
<dbReference type="GO" id="GO:0006898">
    <property type="term" value="P:receptor-mediated endocytosis"/>
    <property type="evidence" value="ECO:0000314"/>
    <property type="project" value="BHF-UCL"/>
</dbReference>
<dbReference type="GO" id="GO:0090118">
    <property type="term" value="P:receptor-mediated endocytosis involved in cholesterol transport"/>
    <property type="evidence" value="ECO:0000315"/>
    <property type="project" value="BHF-UCL"/>
</dbReference>
<dbReference type="GO" id="GO:0043393">
    <property type="term" value="P:regulation of protein binding"/>
    <property type="evidence" value="ECO:0000315"/>
    <property type="project" value="UniProtKB"/>
</dbReference>
<dbReference type="GO" id="GO:1903076">
    <property type="term" value="P:regulation of protein localization to plasma membrane"/>
    <property type="evidence" value="ECO:0000315"/>
    <property type="project" value="BHF-UCL"/>
</dbReference>
<dbReference type="CDD" id="cd13159">
    <property type="entry name" value="PTB_LDLRAP-mammal-like"/>
    <property type="match status" value="1"/>
</dbReference>
<dbReference type="FunFam" id="2.30.29.30:FF:000137">
    <property type="entry name" value="Low density lipoprotein receptor adapter protein 1"/>
    <property type="match status" value="1"/>
</dbReference>
<dbReference type="Gene3D" id="2.30.29.30">
    <property type="entry name" value="Pleckstrin-homology domain (PH domain)/Phosphotyrosine-binding domain (PTB)"/>
    <property type="match status" value="1"/>
</dbReference>
<dbReference type="InterPro" id="IPR051133">
    <property type="entry name" value="Adapter_Engulfment-Domain"/>
</dbReference>
<dbReference type="InterPro" id="IPR011993">
    <property type="entry name" value="PH-like_dom_sf"/>
</dbReference>
<dbReference type="InterPro" id="IPR006020">
    <property type="entry name" value="PTB/PI_dom"/>
</dbReference>
<dbReference type="PANTHER" id="PTHR11232:SF35">
    <property type="entry name" value="LOW DENSITY LIPOPROTEIN RECEPTOR ADAPTER PROTEIN 1"/>
    <property type="match status" value="1"/>
</dbReference>
<dbReference type="PANTHER" id="PTHR11232">
    <property type="entry name" value="PHOSPHOTYROSINE INTERACTION DOMAIN-CONTAINING FAMILY MEMBER"/>
    <property type="match status" value="1"/>
</dbReference>
<dbReference type="Pfam" id="PF00640">
    <property type="entry name" value="PID"/>
    <property type="match status" value="1"/>
</dbReference>
<dbReference type="SMART" id="SM00462">
    <property type="entry name" value="PTB"/>
    <property type="match status" value="1"/>
</dbReference>
<dbReference type="SUPFAM" id="SSF50729">
    <property type="entry name" value="PH domain-like"/>
    <property type="match status" value="1"/>
</dbReference>
<dbReference type="PROSITE" id="PS01179">
    <property type="entry name" value="PID"/>
    <property type="match status" value="1"/>
</dbReference>
<organism>
    <name type="scientific">Homo sapiens</name>
    <name type="common">Human</name>
    <dbReference type="NCBI Taxonomy" id="9606"/>
    <lineage>
        <taxon>Eukaryota</taxon>
        <taxon>Metazoa</taxon>
        <taxon>Chordata</taxon>
        <taxon>Craniata</taxon>
        <taxon>Vertebrata</taxon>
        <taxon>Euteleostomi</taxon>
        <taxon>Mammalia</taxon>
        <taxon>Eutheria</taxon>
        <taxon>Euarchontoglires</taxon>
        <taxon>Primates</taxon>
        <taxon>Haplorrhini</taxon>
        <taxon>Catarrhini</taxon>
        <taxon>Hominidae</taxon>
        <taxon>Homo</taxon>
    </lineage>
</organism>
<comment type="function">
    <text evidence="1 9">Adapter protein (clathrin-associated sorting protein (CLASP)) required for efficient endocytosis of the LDL receptor (LDLR) in polarized cells such as hepatocytes and lymphocytes, but not in non-polarized cells (fibroblasts). May be required for LDL binding and internalization but not for receptor clustering in coated pits. May facilitate the endocytosis of LDLR and LDLR-LDL complexes from coated pits by stabilizing the interaction between the receptor and the structural components of the pits. May also be involved in the internalization of other LDLR family members. Binds to phosphoinositides, which regulate clathrin bud assembly at the cell surface. Required for trafficking of LRP2 to the endocytic recycling compartment which is necessary for LRP2 proteolysis, releasing a tail fragment which translocates to the nucleus and mediates transcriptional repression (By similarity).</text>
</comment>
<comment type="subunit">
    <text evidence="1 2 5">Interacts (via PID domain) with LDLR (via NPXY motif) (PubMed:12221107). Binds to soluble clathrin trimers (PubMed:12221107). Interacts with AP2B1; the interaction mediates the association with the AP-2 complex (PubMed:12221107). Interacts with VLDLR (By similarity). Interacts with LRP2 (By similarity).</text>
</comment>
<comment type="interaction">
    <interactant intactId="EBI-747813">
        <id>Q5SW96</id>
    </interactant>
    <interactant intactId="EBI-11978055">
        <id>Q10567-3</id>
        <label>AP1B1</label>
    </interactant>
    <organismsDiffer>false</organismsDiffer>
    <experiments>3</experiments>
</comment>
<comment type="interaction">
    <interactant intactId="EBI-747813">
        <id>Q5SW96</id>
    </interactant>
    <interactant intactId="EBI-432924">
        <id>P63010</id>
        <label>AP2B1</label>
    </interactant>
    <organismsDiffer>false</organismsDiffer>
    <experiments>4</experiments>
</comment>
<comment type="interaction">
    <interactant intactId="EBI-747813">
        <id>Q5SW96</id>
    </interactant>
    <interactant intactId="EBI-11529439">
        <id>P63010-2</id>
        <label>AP2B1</label>
    </interactant>
    <organismsDiffer>false</organismsDiffer>
    <experiments>5</experiments>
</comment>
<comment type="interaction">
    <interactant intactId="EBI-747813">
        <id>Q5SW96</id>
    </interactant>
    <interactant intactId="EBI-12831272">
        <id>Q6ZVH7</id>
        <label>ESPNL</label>
    </interactant>
    <organismsDiffer>false</organismsDiffer>
    <experiments>3</experiments>
</comment>
<comment type="interaction">
    <interactant intactId="EBI-747813">
        <id>Q5SW96</id>
    </interactant>
    <interactant intactId="EBI-701903">
        <id>Q14192</id>
        <label>FHL2</label>
    </interactant>
    <organismsDiffer>false</organismsDiffer>
    <experiments>3</experiments>
</comment>
<comment type="interaction">
    <interactant intactId="EBI-747813">
        <id>Q5SW96</id>
    </interactant>
    <interactant intactId="EBI-1752118">
        <id>P31273</id>
        <label>HOXC8</label>
    </interactant>
    <organismsDiffer>false</organismsDiffer>
    <experiments>8</experiments>
</comment>
<comment type="interaction">
    <interactant intactId="EBI-747813">
        <id>Q5SW96</id>
    </interactant>
    <interactant intactId="EBI-7098661">
        <id>P13378</id>
        <label>HOXD8</label>
    </interactant>
    <organismsDiffer>false</organismsDiffer>
    <experiments>3</experiments>
</comment>
<comment type="interaction">
    <interactant intactId="EBI-747813">
        <id>Q5SW96</id>
    </interactant>
    <interactant intactId="EBI-743122">
        <id>P43358</id>
        <label>MAGEA4</label>
    </interactant>
    <organismsDiffer>false</organismsDiffer>
    <experiments>3</experiments>
</comment>
<comment type="interaction">
    <interactant intactId="EBI-747813">
        <id>Q5SW96</id>
    </interactant>
    <interactant intactId="EBI-717887">
        <id>Q9UPT6</id>
        <label>MAPK8IP3</label>
    </interactant>
    <organismsDiffer>false</organismsDiffer>
    <experiments>6</experiments>
</comment>
<comment type="interaction">
    <interactant intactId="EBI-747813">
        <id>Q5SW96</id>
    </interactant>
    <interactant intactId="EBI-17490746">
        <id>A8MTQ0</id>
        <label>NOTO</label>
    </interactant>
    <organismsDiffer>false</organismsDiffer>
    <experiments>3</experiments>
</comment>
<comment type="interaction">
    <interactant intactId="EBI-747813">
        <id>Q5SW96</id>
    </interactant>
    <interactant intactId="EBI-296331">
        <id>Q02548</id>
        <label>PAX5</label>
    </interactant>
    <organismsDiffer>false</organismsDiffer>
    <experiments>3</experiments>
</comment>
<comment type="interaction">
    <interactant intactId="EBI-747813">
        <id>Q5SW96</id>
    </interactant>
    <interactant intactId="EBI-12215623">
        <id>Q8NDX1-2</id>
        <label>PSD4</label>
    </interactant>
    <organismsDiffer>false</organismsDiffer>
    <experiments>6</experiments>
</comment>
<comment type="interaction">
    <interactant intactId="EBI-747813">
        <id>Q5SW96</id>
    </interactant>
    <interactant intactId="EBI-746930">
        <id>Q9H668</id>
        <label>STN1</label>
    </interactant>
    <organismsDiffer>false</organismsDiffer>
    <experiments>13</experiments>
</comment>
<comment type="subcellular location">
    <subcellularLocation>
        <location evidence="7">Cytoplasm</location>
    </subcellularLocation>
</comment>
<comment type="tissue specificity">
    <text>Expressed at high levels in the kidney, liver, and placenta, with lower levels detectable in brain, heart, muscle, colon, spleen, intestine, lung, and leukocytes.</text>
</comment>
<comment type="domain">
    <text evidence="10">The [DE]-X(1,2)-F-X-X-[FL]-X-X-X-R motif mediates interaction the AP-2 complex subunit AP2B1.</text>
</comment>
<comment type="domain">
    <text evidence="1">The PID domain mediates interaction with the NPXY internalization motif of LDLR.</text>
</comment>
<comment type="disease" evidence="4">
    <disease id="DI-01242">
        <name>Hypercholesterolemia, familial, 4</name>
        <acronym>FHCL4</acronym>
        <description>A form of hypercholesterolemia, a disorder of lipoprotein metabolism characterized by elevated serum low-density lipoprotein (LDL) cholesterol levels, which result in excess deposition of cholesterol in tissues and leads to xanthelasma, xanthomas, accelerated atherosclerosis and increased risk of premature coronary heart disease. FHCL4 inheritance is autosomal recessive.</description>
        <dbReference type="MIM" id="603813"/>
    </disease>
    <text>The disease is caused by variants affecting the gene represented in this entry.</text>
</comment>
<proteinExistence type="evidence at protein level"/>
<protein>
    <recommendedName>
        <fullName evidence="15">Low density lipoprotein receptor adapter protein 1</fullName>
    </recommendedName>
    <alternativeName>
        <fullName evidence="14">Autosomal recessive hypercholesterolemia protein</fullName>
    </alternativeName>
</protein>
<feature type="chain" id="PRO_0000064675" description="Low density lipoprotein receptor adapter protein 1">
    <location>
        <begin position="1"/>
        <end position="308"/>
    </location>
</feature>
<feature type="domain" description="PID" evidence="3">
    <location>
        <begin position="42"/>
        <end position="196"/>
    </location>
</feature>
<feature type="region of interest" description="AP-2 complex binding" evidence="5">
    <location>
        <begin position="249"/>
        <end position="276"/>
    </location>
</feature>
<feature type="short sequence motif" description="Clathrin box" evidence="5">
    <location>
        <begin position="212"/>
        <end position="216"/>
    </location>
</feature>
<feature type="short sequence motif" description="[DE]-X(1,2)-F-X-X-[FL]-X-X-X-R motif" evidence="10">
    <location>
        <begin position="257"/>
        <end position="266"/>
    </location>
</feature>
<feature type="modified residue" description="N-acetylmethionine" evidence="18">
    <location>
        <position position="1"/>
    </location>
</feature>
<feature type="modified residue" description="Phosphoserine" evidence="17 19">
    <location>
        <position position="14"/>
    </location>
</feature>
<feature type="modified residue" description="Phosphoserine" evidence="19">
    <location>
        <position position="186"/>
    </location>
</feature>
<feature type="modified residue" description="Phosphoserine" evidence="2">
    <location>
        <position position="202"/>
    </location>
</feature>
<feature type="sequence variant" id="VAR_076925" description="Found in patients with hypercholesterolemia; likely pathogenic; dbSNP:rs752849346." evidence="13">
    <original>T</original>
    <variation>M</variation>
    <location>
        <position position="56"/>
    </location>
</feature>
<feature type="sequence variant" id="VAR_023320" description="In FHCL4; Lebanon; requires 2 nucleotide substitutions; dbSNP:rs386629678." evidence="4">
    <original>S</original>
    <variation>H</variation>
    <location>
        <position position="202"/>
    </location>
</feature>
<feature type="sequence variant" id="VAR_028403" description="In dbSNP:rs6687605." evidence="4 6 8 12 13">
    <original>S</original>
    <variation>P</variation>
    <location>
        <position position="202"/>
    </location>
</feature>
<feature type="mutagenesis site" description="Abolishes LDLR cytoplasmic tail binding." evidence="5">
    <original>F</original>
    <variation>A</variation>
    <location>
        <position position="165"/>
    </location>
</feature>
<feature type="mutagenesis site" description="Abolishes LDLR cytoplasmic tail binding." evidence="5">
    <original>F</original>
    <variation>V</variation>
    <location>
        <position position="165"/>
    </location>
</feature>
<feature type="mutagenesis site" description="Abolishes clathrin binding." evidence="5">
    <original>LL</original>
    <variation>AA</variation>
    <location>
        <begin position="212"/>
        <end position="213"/>
    </location>
</feature>
<feature type="mutagenesis site" description="Abolishes clathrin binding." evidence="5">
    <original>D</original>
    <variation>A</variation>
    <location>
        <position position="214"/>
    </location>
</feature>
<feature type="mutagenesis site" description="Abolishes clathrin binding." evidence="5">
    <original>E</original>
    <variation>A</variation>
    <location>
        <position position="216"/>
    </location>
</feature>
<feature type="mutagenesis site" description="Abolishes interaction with AP2B1." evidence="11">
    <original>D</original>
    <variation>R</variation>
    <location>
        <position position="256"/>
    </location>
</feature>
<feature type="mutagenesis site" description="Abolishes AP-2 complex binding." evidence="5">
    <original>R</original>
    <variation>A</variation>
    <location>
        <position position="266"/>
    </location>
</feature>
<feature type="helix" evidence="20">
    <location>
        <begin position="256"/>
        <end position="266"/>
    </location>
</feature>
<gene>
    <name evidence="16" type="primary">LDLRAP1</name>
    <name evidence="14" type="synonym">ARH</name>
</gene>